<feature type="chain" id="PRO_1000115738" description="1-deoxy-D-xylulose-5-phosphate synthase">
    <location>
        <begin position="1"/>
        <end position="620"/>
    </location>
</feature>
<feature type="binding site" evidence="1">
    <location>
        <position position="80"/>
    </location>
    <ligand>
        <name>thiamine diphosphate</name>
        <dbReference type="ChEBI" id="CHEBI:58937"/>
    </ligand>
</feature>
<feature type="binding site" evidence="1">
    <location>
        <begin position="121"/>
        <end position="123"/>
    </location>
    <ligand>
        <name>thiamine diphosphate</name>
        <dbReference type="ChEBI" id="CHEBI:58937"/>
    </ligand>
</feature>
<feature type="binding site" evidence="1">
    <location>
        <position position="152"/>
    </location>
    <ligand>
        <name>Mg(2+)</name>
        <dbReference type="ChEBI" id="CHEBI:18420"/>
    </ligand>
</feature>
<feature type="binding site" evidence="1">
    <location>
        <begin position="153"/>
        <end position="154"/>
    </location>
    <ligand>
        <name>thiamine diphosphate</name>
        <dbReference type="ChEBI" id="CHEBI:58937"/>
    </ligand>
</feature>
<feature type="binding site" evidence="1">
    <location>
        <position position="181"/>
    </location>
    <ligand>
        <name>Mg(2+)</name>
        <dbReference type="ChEBI" id="CHEBI:18420"/>
    </ligand>
</feature>
<feature type="binding site" evidence="1">
    <location>
        <position position="181"/>
    </location>
    <ligand>
        <name>thiamine diphosphate</name>
        <dbReference type="ChEBI" id="CHEBI:58937"/>
    </ligand>
</feature>
<feature type="binding site" evidence="1">
    <location>
        <position position="288"/>
    </location>
    <ligand>
        <name>thiamine diphosphate</name>
        <dbReference type="ChEBI" id="CHEBI:58937"/>
    </ligand>
</feature>
<feature type="binding site" evidence="1">
    <location>
        <position position="370"/>
    </location>
    <ligand>
        <name>thiamine diphosphate</name>
        <dbReference type="ChEBI" id="CHEBI:58937"/>
    </ligand>
</feature>
<comment type="function">
    <text evidence="1">Catalyzes the acyloin condensation reaction between C atoms 2 and 3 of pyruvate and glyceraldehyde 3-phosphate to yield 1-deoxy-D-xylulose-5-phosphate (DXP).</text>
</comment>
<comment type="catalytic activity">
    <reaction evidence="1">
        <text>D-glyceraldehyde 3-phosphate + pyruvate + H(+) = 1-deoxy-D-xylulose 5-phosphate + CO2</text>
        <dbReference type="Rhea" id="RHEA:12605"/>
        <dbReference type="ChEBI" id="CHEBI:15361"/>
        <dbReference type="ChEBI" id="CHEBI:15378"/>
        <dbReference type="ChEBI" id="CHEBI:16526"/>
        <dbReference type="ChEBI" id="CHEBI:57792"/>
        <dbReference type="ChEBI" id="CHEBI:59776"/>
        <dbReference type="EC" id="2.2.1.7"/>
    </reaction>
</comment>
<comment type="cofactor">
    <cofactor evidence="1">
        <name>Mg(2+)</name>
        <dbReference type="ChEBI" id="CHEBI:18420"/>
    </cofactor>
    <text evidence="1">Binds 1 Mg(2+) ion per subunit.</text>
</comment>
<comment type="cofactor">
    <cofactor evidence="1">
        <name>thiamine diphosphate</name>
        <dbReference type="ChEBI" id="CHEBI:58937"/>
    </cofactor>
    <text evidence="1">Binds 1 thiamine pyrophosphate per subunit.</text>
</comment>
<comment type="pathway">
    <text evidence="1">Metabolic intermediate biosynthesis; 1-deoxy-D-xylulose 5-phosphate biosynthesis; 1-deoxy-D-xylulose 5-phosphate from D-glyceraldehyde 3-phosphate and pyruvate: step 1/1.</text>
</comment>
<comment type="subunit">
    <text evidence="1">Homodimer.</text>
</comment>
<comment type="similarity">
    <text evidence="1">Belongs to the transketolase family. DXPS subfamily.</text>
</comment>
<protein>
    <recommendedName>
        <fullName evidence="1">1-deoxy-D-xylulose-5-phosphate synthase</fullName>
        <ecNumber evidence="1">2.2.1.7</ecNumber>
    </recommendedName>
    <alternativeName>
        <fullName evidence="1">1-deoxyxylulose-5-phosphate synthase</fullName>
        <shortName evidence="1">DXP synthase</shortName>
        <shortName evidence="1">DXPS</shortName>
    </alternativeName>
</protein>
<proteinExistence type="inferred from homology"/>
<name>DXS_ECO5E</name>
<gene>
    <name evidence="1" type="primary">dxs</name>
    <name type="ordered locus">ECH74115_0503</name>
</gene>
<evidence type="ECO:0000255" key="1">
    <source>
        <dbReference type="HAMAP-Rule" id="MF_00315"/>
    </source>
</evidence>
<keyword id="KW-0414">Isoprene biosynthesis</keyword>
<keyword id="KW-0460">Magnesium</keyword>
<keyword id="KW-0479">Metal-binding</keyword>
<keyword id="KW-0784">Thiamine biosynthesis</keyword>
<keyword id="KW-0786">Thiamine pyrophosphate</keyword>
<keyword id="KW-0808">Transferase</keyword>
<organism>
    <name type="scientific">Escherichia coli O157:H7 (strain EC4115 / EHEC)</name>
    <dbReference type="NCBI Taxonomy" id="444450"/>
    <lineage>
        <taxon>Bacteria</taxon>
        <taxon>Pseudomonadati</taxon>
        <taxon>Pseudomonadota</taxon>
        <taxon>Gammaproteobacteria</taxon>
        <taxon>Enterobacterales</taxon>
        <taxon>Enterobacteriaceae</taxon>
        <taxon>Escherichia</taxon>
    </lineage>
</organism>
<dbReference type="EC" id="2.2.1.7" evidence="1"/>
<dbReference type="EMBL" id="CP001164">
    <property type="protein sequence ID" value="ACI37128.1"/>
    <property type="molecule type" value="Genomic_DNA"/>
</dbReference>
<dbReference type="RefSeq" id="WP_000006821.1">
    <property type="nucleotide sequence ID" value="NC_011353.1"/>
</dbReference>
<dbReference type="SMR" id="B5Z3S5"/>
<dbReference type="KEGG" id="ecf:ECH74115_0503"/>
<dbReference type="HOGENOM" id="CLU_009227_1_4_6"/>
<dbReference type="UniPathway" id="UPA00064">
    <property type="reaction ID" value="UER00091"/>
</dbReference>
<dbReference type="GO" id="GO:0005829">
    <property type="term" value="C:cytosol"/>
    <property type="evidence" value="ECO:0007669"/>
    <property type="project" value="TreeGrafter"/>
</dbReference>
<dbReference type="GO" id="GO:0008661">
    <property type="term" value="F:1-deoxy-D-xylulose-5-phosphate synthase activity"/>
    <property type="evidence" value="ECO:0007669"/>
    <property type="project" value="UniProtKB-UniRule"/>
</dbReference>
<dbReference type="GO" id="GO:0000287">
    <property type="term" value="F:magnesium ion binding"/>
    <property type="evidence" value="ECO:0007669"/>
    <property type="project" value="UniProtKB-UniRule"/>
</dbReference>
<dbReference type="GO" id="GO:0030976">
    <property type="term" value="F:thiamine pyrophosphate binding"/>
    <property type="evidence" value="ECO:0007669"/>
    <property type="project" value="UniProtKB-UniRule"/>
</dbReference>
<dbReference type="GO" id="GO:0052865">
    <property type="term" value="P:1-deoxy-D-xylulose 5-phosphate biosynthetic process"/>
    <property type="evidence" value="ECO:0007669"/>
    <property type="project" value="UniProtKB-UniPathway"/>
</dbReference>
<dbReference type="GO" id="GO:0019288">
    <property type="term" value="P:isopentenyl diphosphate biosynthetic process, methylerythritol 4-phosphate pathway"/>
    <property type="evidence" value="ECO:0007669"/>
    <property type="project" value="TreeGrafter"/>
</dbReference>
<dbReference type="GO" id="GO:0016114">
    <property type="term" value="P:terpenoid biosynthetic process"/>
    <property type="evidence" value="ECO:0007669"/>
    <property type="project" value="UniProtKB-UniRule"/>
</dbReference>
<dbReference type="GO" id="GO:0009228">
    <property type="term" value="P:thiamine biosynthetic process"/>
    <property type="evidence" value="ECO:0007669"/>
    <property type="project" value="UniProtKB-UniRule"/>
</dbReference>
<dbReference type="CDD" id="cd02007">
    <property type="entry name" value="TPP_DXS"/>
    <property type="match status" value="1"/>
</dbReference>
<dbReference type="CDD" id="cd07033">
    <property type="entry name" value="TPP_PYR_DXS_TK_like"/>
    <property type="match status" value="1"/>
</dbReference>
<dbReference type="FunFam" id="3.40.50.920:FF:000002">
    <property type="entry name" value="1-deoxy-D-xylulose-5-phosphate synthase"/>
    <property type="match status" value="1"/>
</dbReference>
<dbReference type="FunFam" id="3.40.50.970:FF:000005">
    <property type="entry name" value="1-deoxy-D-xylulose-5-phosphate synthase"/>
    <property type="match status" value="1"/>
</dbReference>
<dbReference type="Gene3D" id="3.40.50.920">
    <property type="match status" value="1"/>
</dbReference>
<dbReference type="Gene3D" id="3.40.50.970">
    <property type="match status" value="2"/>
</dbReference>
<dbReference type="HAMAP" id="MF_00315">
    <property type="entry name" value="DXP_synth"/>
    <property type="match status" value="1"/>
</dbReference>
<dbReference type="InterPro" id="IPR005477">
    <property type="entry name" value="Dxylulose-5-P_synthase"/>
</dbReference>
<dbReference type="InterPro" id="IPR029061">
    <property type="entry name" value="THDP-binding"/>
</dbReference>
<dbReference type="InterPro" id="IPR009014">
    <property type="entry name" value="Transketo_C/PFOR_II"/>
</dbReference>
<dbReference type="InterPro" id="IPR005475">
    <property type="entry name" value="Transketolase-like_Pyr-bd"/>
</dbReference>
<dbReference type="InterPro" id="IPR020826">
    <property type="entry name" value="Transketolase_BS"/>
</dbReference>
<dbReference type="InterPro" id="IPR033248">
    <property type="entry name" value="Transketolase_C"/>
</dbReference>
<dbReference type="InterPro" id="IPR049557">
    <property type="entry name" value="Transketolase_CS"/>
</dbReference>
<dbReference type="NCBIfam" id="TIGR00204">
    <property type="entry name" value="dxs"/>
    <property type="match status" value="1"/>
</dbReference>
<dbReference type="NCBIfam" id="NF003933">
    <property type="entry name" value="PRK05444.2-2"/>
    <property type="match status" value="1"/>
</dbReference>
<dbReference type="PANTHER" id="PTHR43322">
    <property type="entry name" value="1-D-DEOXYXYLULOSE 5-PHOSPHATE SYNTHASE-RELATED"/>
    <property type="match status" value="1"/>
</dbReference>
<dbReference type="PANTHER" id="PTHR43322:SF5">
    <property type="entry name" value="1-DEOXY-D-XYLULOSE-5-PHOSPHATE SYNTHASE, CHLOROPLASTIC"/>
    <property type="match status" value="1"/>
</dbReference>
<dbReference type="Pfam" id="PF13292">
    <property type="entry name" value="DXP_synthase_N"/>
    <property type="match status" value="1"/>
</dbReference>
<dbReference type="Pfam" id="PF02779">
    <property type="entry name" value="Transket_pyr"/>
    <property type="match status" value="1"/>
</dbReference>
<dbReference type="Pfam" id="PF02780">
    <property type="entry name" value="Transketolase_C"/>
    <property type="match status" value="1"/>
</dbReference>
<dbReference type="SMART" id="SM00861">
    <property type="entry name" value="Transket_pyr"/>
    <property type="match status" value="1"/>
</dbReference>
<dbReference type="SUPFAM" id="SSF52518">
    <property type="entry name" value="Thiamin diphosphate-binding fold (THDP-binding)"/>
    <property type="match status" value="2"/>
</dbReference>
<dbReference type="SUPFAM" id="SSF52922">
    <property type="entry name" value="TK C-terminal domain-like"/>
    <property type="match status" value="1"/>
</dbReference>
<dbReference type="PROSITE" id="PS00801">
    <property type="entry name" value="TRANSKETOLASE_1"/>
    <property type="match status" value="1"/>
</dbReference>
<dbReference type="PROSITE" id="PS00802">
    <property type="entry name" value="TRANSKETOLASE_2"/>
    <property type="match status" value="1"/>
</dbReference>
<sequence length="620" mass="67633">MSFDIAKYPTLALVDSTQELRLLPKESLPKLCDELRRYLLDSVSRSSGHFASGLGTVELTVALHYVYNTPFDQLIWDVGHQAYPHKILTGRRDKIGTIRQKGGLHPFPWRGESEYDVLSVGHSSTSISAGIGIAVAAEKEGKNRRTVCVIGDGAITAGMAFEAMNHAGDIRPDMLVVLNDNEMSISENVGALNNHLAQLLSGKLYSSLREGGKKVFSGVPPIKELLKRTEEHIKGMVVPGTLFEELGFNYIGPVDGHDVLGLITTLKNMRDLKGPQFLHIMTKKGRGYEPAEKDPITFHAVPKFDPSSGCLPKSSGGLPSYSKIFGDWLCETAAKDNKLMAITPAMREGSGMVEFSRKFPDRYFDVAIAEQHAVTFAAGLAIGGYKPIVAIYSTFLQRAYDQVLHDVAIQKLPVLFAIDRAGIVGADGQTHQGAFDLSYLRCIPEMVIMTPSDENECRQMLYTGYHYNDGPSAVRYPRGNAVGVELTPLEKLPIGKGIVKRRGEKLAILNFGTLMPEAAKVAESLNATLVDMRFVKPLDETLILEMAASHEALVTVEENAIMGGAGSGVNEVLMAHRKPVPVLNIGLPDFFIPQGTQEEMRAELGLDAAGMEAKIKAWLA</sequence>
<accession>B5Z3S5</accession>
<reference key="1">
    <citation type="journal article" date="2011" name="Proc. Natl. Acad. Sci. U.S.A.">
        <title>Genomic anatomy of Escherichia coli O157:H7 outbreaks.</title>
        <authorList>
            <person name="Eppinger M."/>
            <person name="Mammel M.K."/>
            <person name="Leclerc J.E."/>
            <person name="Ravel J."/>
            <person name="Cebula T.A."/>
        </authorList>
    </citation>
    <scope>NUCLEOTIDE SEQUENCE [LARGE SCALE GENOMIC DNA]</scope>
    <source>
        <strain>EC4115 / EHEC</strain>
    </source>
</reference>